<name>RS3_CAMLR</name>
<organism>
    <name type="scientific">Campylobacter lari (strain RM2100 / D67 / ATCC BAA-1060)</name>
    <dbReference type="NCBI Taxonomy" id="306263"/>
    <lineage>
        <taxon>Bacteria</taxon>
        <taxon>Pseudomonadati</taxon>
        <taxon>Campylobacterota</taxon>
        <taxon>Epsilonproteobacteria</taxon>
        <taxon>Campylobacterales</taxon>
        <taxon>Campylobacteraceae</taxon>
        <taxon>Campylobacter</taxon>
    </lineage>
</organism>
<gene>
    <name evidence="1" type="primary">rpsC</name>
    <name type="ordered locus">Cla_0065</name>
</gene>
<protein>
    <recommendedName>
        <fullName evidence="1">Small ribosomal subunit protein uS3</fullName>
    </recommendedName>
    <alternativeName>
        <fullName evidence="3">30S ribosomal protein S3</fullName>
    </alternativeName>
</protein>
<keyword id="KW-1185">Reference proteome</keyword>
<keyword id="KW-0687">Ribonucleoprotein</keyword>
<keyword id="KW-0689">Ribosomal protein</keyword>
<keyword id="KW-0694">RNA-binding</keyword>
<keyword id="KW-0699">rRNA-binding</keyword>
<dbReference type="EMBL" id="CP000932">
    <property type="protein sequence ID" value="ACM63431.1"/>
    <property type="molecule type" value="Genomic_DNA"/>
</dbReference>
<dbReference type="RefSeq" id="WP_012660817.1">
    <property type="nucleotide sequence ID" value="NC_012039.1"/>
</dbReference>
<dbReference type="SMR" id="B9KEE6"/>
<dbReference type="STRING" id="306263.Cla_0065"/>
<dbReference type="KEGG" id="cla:CLA_0065"/>
<dbReference type="PATRIC" id="fig|306263.5.peg.64"/>
<dbReference type="eggNOG" id="COG0092">
    <property type="taxonomic scope" value="Bacteria"/>
</dbReference>
<dbReference type="HOGENOM" id="CLU_058591_0_2_7"/>
<dbReference type="Proteomes" id="UP000007727">
    <property type="component" value="Chromosome"/>
</dbReference>
<dbReference type="GO" id="GO:0022627">
    <property type="term" value="C:cytosolic small ribosomal subunit"/>
    <property type="evidence" value="ECO:0007669"/>
    <property type="project" value="TreeGrafter"/>
</dbReference>
<dbReference type="GO" id="GO:0003729">
    <property type="term" value="F:mRNA binding"/>
    <property type="evidence" value="ECO:0007669"/>
    <property type="project" value="UniProtKB-UniRule"/>
</dbReference>
<dbReference type="GO" id="GO:0019843">
    <property type="term" value="F:rRNA binding"/>
    <property type="evidence" value="ECO:0007669"/>
    <property type="project" value="UniProtKB-UniRule"/>
</dbReference>
<dbReference type="GO" id="GO:0003735">
    <property type="term" value="F:structural constituent of ribosome"/>
    <property type="evidence" value="ECO:0007669"/>
    <property type="project" value="InterPro"/>
</dbReference>
<dbReference type="GO" id="GO:0006412">
    <property type="term" value="P:translation"/>
    <property type="evidence" value="ECO:0007669"/>
    <property type="project" value="UniProtKB-UniRule"/>
</dbReference>
<dbReference type="CDD" id="cd02412">
    <property type="entry name" value="KH-II_30S_S3"/>
    <property type="match status" value="1"/>
</dbReference>
<dbReference type="FunFam" id="3.30.1140.32:FF:000006">
    <property type="entry name" value="30S ribosomal protein S3"/>
    <property type="match status" value="1"/>
</dbReference>
<dbReference type="FunFam" id="3.30.300.20:FF:000001">
    <property type="entry name" value="30S ribosomal protein S3"/>
    <property type="match status" value="1"/>
</dbReference>
<dbReference type="Gene3D" id="3.30.300.20">
    <property type="match status" value="1"/>
</dbReference>
<dbReference type="Gene3D" id="3.30.1140.32">
    <property type="entry name" value="Ribosomal protein S3, C-terminal domain"/>
    <property type="match status" value="1"/>
</dbReference>
<dbReference type="HAMAP" id="MF_01309_B">
    <property type="entry name" value="Ribosomal_uS3_B"/>
    <property type="match status" value="1"/>
</dbReference>
<dbReference type="InterPro" id="IPR004087">
    <property type="entry name" value="KH_dom"/>
</dbReference>
<dbReference type="InterPro" id="IPR015946">
    <property type="entry name" value="KH_dom-like_a/b"/>
</dbReference>
<dbReference type="InterPro" id="IPR004044">
    <property type="entry name" value="KH_dom_type_2"/>
</dbReference>
<dbReference type="InterPro" id="IPR009019">
    <property type="entry name" value="KH_sf_prok-type"/>
</dbReference>
<dbReference type="InterPro" id="IPR036419">
    <property type="entry name" value="Ribosomal_S3_C_sf"/>
</dbReference>
<dbReference type="InterPro" id="IPR005704">
    <property type="entry name" value="Ribosomal_uS3_bac-typ"/>
</dbReference>
<dbReference type="InterPro" id="IPR001351">
    <property type="entry name" value="Ribosomal_uS3_C"/>
</dbReference>
<dbReference type="InterPro" id="IPR018280">
    <property type="entry name" value="Ribosomal_uS3_CS"/>
</dbReference>
<dbReference type="NCBIfam" id="TIGR01009">
    <property type="entry name" value="rpsC_bact"/>
    <property type="match status" value="1"/>
</dbReference>
<dbReference type="PANTHER" id="PTHR11760">
    <property type="entry name" value="30S/40S RIBOSOMAL PROTEIN S3"/>
    <property type="match status" value="1"/>
</dbReference>
<dbReference type="PANTHER" id="PTHR11760:SF19">
    <property type="entry name" value="SMALL RIBOSOMAL SUBUNIT PROTEIN US3C"/>
    <property type="match status" value="1"/>
</dbReference>
<dbReference type="Pfam" id="PF07650">
    <property type="entry name" value="KH_2"/>
    <property type="match status" value="1"/>
</dbReference>
<dbReference type="Pfam" id="PF00189">
    <property type="entry name" value="Ribosomal_S3_C"/>
    <property type="match status" value="1"/>
</dbReference>
<dbReference type="SMART" id="SM00322">
    <property type="entry name" value="KH"/>
    <property type="match status" value="1"/>
</dbReference>
<dbReference type="SUPFAM" id="SSF54814">
    <property type="entry name" value="Prokaryotic type KH domain (KH-domain type II)"/>
    <property type="match status" value="1"/>
</dbReference>
<dbReference type="SUPFAM" id="SSF54821">
    <property type="entry name" value="Ribosomal protein S3 C-terminal domain"/>
    <property type="match status" value="1"/>
</dbReference>
<dbReference type="PROSITE" id="PS50823">
    <property type="entry name" value="KH_TYPE_2"/>
    <property type="match status" value="1"/>
</dbReference>
<dbReference type="PROSITE" id="PS00548">
    <property type="entry name" value="RIBOSOMAL_S3"/>
    <property type="match status" value="1"/>
</dbReference>
<evidence type="ECO:0000255" key="1">
    <source>
        <dbReference type="HAMAP-Rule" id="MF_01309"/>
    </source>
</evidence>
<evidence type="ECO:0000256" key="2">
    <source>
        <dbReference type="SAM" id="MobiDB-lite"/>
    </source>
</evidence>
<evidence type="ECO:0000305" key="3"/>
<feature type="chain" id="PRO_1000165484" description="Small ribosomal subunit protein uS3">
    <location>
        <begin position="1"/>
        <end position="233"/>
    </location>
</feature>
<feature type="domain" description="KH type-2" evidence="1">
    <location>
        <begin position="39"/>
        <end position="107"/>
    </location>
</feature>
<feature type="region of interest" description="Disordered" evidence="2">
    <location>
        <begin position="211"/>
        <end position="233"/>
    </location>
</feature>
<feature type="compositionally biased region" description="Basic and acidic residues" evidence="2">
    <location>
        <begin position="213"/>
        <end position="222"/>
    </location>
</feature>
<feature type="compositionally biased region" description="Basic residues" evidence="2">
    <location>
        <begin position="224"/>
        <end position="233"/>
    </location>
</feature>
<reference key="1">
    <citation type="journal article" date="2008" name="Foodborne Pathog. Dis.">
        <title>The complete genome sequence and analysis of the human pathogen Campylobacter lari.</title>
        <authorList>
            <person name="Miller W.G."/>
            <person name="Wang G."/>
            <person name="Binnewies T.T."/>
            <person name="Parker C.T."/>
        </authorList>
    </citation>
    <scope>NUCLEOTIDE SEQUENCE [LARGE SCALE GENOMIC DNA]</scope>
    <source>
        <strain>RM2100 / D67 / ATCC BAA-1060</strain>
    </source>
</reference>
<accession>B9KEE6</accession>
<comment type="function">
    <text evidence="1">Binds the lower part of the 30S subunit head. Binds mRNA in the 70S ribosome, positioning it for translation.</text>
</comment>
<comment type="subunit">
    <text evidence="1">Part of the 30S ribosomal subunit. Forms a tight complex with proteins S10 and S14.</text>
</comment>
<comment type="similarity">
    <text evidence="1">Belongs to the universal ribosomal protein uS3 family.</text>
</comment>
<sequence>MGQKVNPIGLRLGINRNWESRWFPTKANMAENIGEDYKIRTFLKRKLYYAGISQILVERTAKKLRVTVVAARPGIIIGKKGSDVDVLRKELQNLIGKEVNINIKEERKAGASAQLAAESVATQLEKRIAFRRAMKKVIQGAQKAGAKGIKVSVSGRLGGAEMARTEWYLEGRVPLHTLRAKIDYGFAEAHTTYGNIGIKVWIFKGEVLQKGVQPEKTEESAPAKKPRRARRGK</sequence>
<proteinExistence type="inferred from homology"/>